<evidence type="ECO:0000255" key="1">
    <source>
        <dbReference type="HAMAP-Rule" id="MF_01536"/>
    </source>
</evidence>
<sequence length="121" mass="13465">MVHMHITAWALGLILFFVAYSLYSAGRKGKGVHMGLRLMYIIIIVTGFMLYMGIMKTATSNMHMWYGLKMIAGILVIGGMEMVLVKMSKNKATGAVWGLFIVALVAVFYLGLKLPIGWQVF</sequence>
<organism>
    <name type="scientific">Bacillus cereus (strain AH820)</name>
    <dbReference type="NCBI Taxonomy" id="405535"/>
    <lineage>
        <taxon>Bacteria</taxon>
        <taxon>Bacillati</taxon>
        <taxon>Bacillota</taxon>
        <taxon>Bacilli</taxon>
        <taxon>Bacillales</taxon>
        <taxon>Bacillaceae</taxon>
        <taxon>Bacillus</taxon>
        <taxon>Bacillus cereus group</taxon>
    </lineage>
</organism>
<keyword id="KW-1003">Cell membrane</keyword>
<keyword id="KW-0472">Membrane</keyword>
<keyword id="KW-0812">Transmembrane</keyword>
<keyword id="KW-1133">Transmembrane helix</keyword>
<gene>
    <name type="ordered locus">BCAH820_1232</name>
</gene>
<feature type="chain" id="PRO_1000198639" description="UPF0344 protein BCAH820_1232">
    <location>
        <begin position="1"/>
        <end position="121"/>
    </location>
</feature>
<feature type="transmembrane region" description="Helical" evidence="1">
    <location>
        <begin position="6"/>
        <end position="26"/>
    </location>
</feature>
<feature type="transmembrane region" description="Helical" evidence="1">
    <location>
        <begin position="38"/>
        <end position="58"/>
    </location>
</feature>
<feature type="transmembrane region" description="Helical" evidence="1">
    <location>
        <begin position="65"/>
        <end position="85"/>
    </location>
</feature>
<feature type="transmembrane region" description="Helical" evidence="1">
    <location>
        <begin position="92"/>
        <end position="112"/>
    </location>
</feature>
<proteinExistence type="inferred from homology"/>
<accession>B7JDV6</accession>
<dbReference type="EMBL" id="CP001283">
    <property type="protein sequence ID" value="ACK92574.1"/>
    <property type="molecule type" value="Genomic_DNA"/>
</dbReference>
<dbReference type="RefSeq" id="WP_000233490.1">
    <property type="nucleotide sequence ID" value="NC_011773.1"/>
</dbReference>
<dbReference type="KEGG" id="bcu:BCAH820_1232"/>
<dbReference type="HOGENOM" id="CLU_146641_1_1_9"/>
<dbReference type="Proteomes" id="UP000001363">
    <property type="component" value="Chromosome"/>
</dbReference>
<dbReference type="GO" id="GO:0005886">
    <property type="term" value="C:plasma membrane"/>
    <property type="evidence" value="ECO:0007669"/>
    <property type="project" value="UniProtKB-SubCell"/>
</dbReference>
<dbReference type="HAMAP" id="MF_01536">
    <property type="entry name" value="UPF0344"/>
    <property type="match status" value="1"/>
</dbReference>
<dbReference type="InterPro" id="IPR010899">
    <property type="entry name" value="UPF0344"/>
</dbReference>
<dbReference type="NCBIfam" id="NF010194">
    <property type="entry name" value="PRK13673.1-1"/>
    <property type="match status" value="1"/>
</dbReference>
<dbReference type="Pfam" id="PF07457">
    <property type="entry name" value="DUF1516"/>
    <property type="match status" value="1"/>
</dbReference>
<protein>
    <recommendedName>
        <fullName evidence="1">UPF0344 protein BCAH820_1232</fullName>
    </recommendedName>
</protein>
<name>Y1232_BACC0</name>
<reference key="1">
    <citation type="submission" date="2008-10" db="EMBL/GenBank/DDBJ databases">
        <title>Genome sequence of Bacillus cereus AH820.</title>
        <authorList>
            <person name="Dodson R.J."/>
            <person name="Durkin A.S."/>
            <person name="Rosovitz M.J."/>
            <person name="Rasko D.A."/>
            <person name="Hoffmaster A."/>
            <person name="Ravel J."/>
            <person name="Sutton G."/>
        </authorList>
    </citation>
    <scope>NUCLEOTIDE SEQUENCE [LARGE SCALE GENOMIC DNA]</scope>
    <source>
        <strain>AH820</strain>
    </source>
</reference>
<comment type="subcellular location">
    <subcellularLocation>
        <location evidence="1">Cell membrane</location>
        <topology evidence="1">Multi-pass membrane protein</topology>
    </subcellularLocation>
</comment>
<comment type="similarity">
    <text evidence="1">Belongs to the UPF0344 family.</text>
</comment>